<reference key="1">
    <citation type="journal article" date="2002" name="Mol. Microbiol.">
        <title>Genome sequence of Streptococcus agalactiae, a pathogen causing invasive neonatal disease.</title>
        <authorList>
            <person name="Glaser P."/>
            <person name="Rusniok C."/>
            <person name="Buchrieser C."/>
            <person name="Chevalier F."/>
            <person name="Frangeul L."/>
            <person name="Msadek T."/>
            <person name="Zouine M."/>
            <person name="Couve E."/>
            <person name="Lalioui L."/>
            <person name="Poyart C."/>
            <person name="Trieu-Cuot P."/>
            <person name="Kunst F."/>
        </authorList>
    </citation>
    <scope>NUCLEOTIDE SEQUENCE [LARGE SCALE GENOMIC DNA]</scope>
    <source>
        <strain>NEM316</strain>
    </source>
</reference>
<evidence type="ECO:0000250" key="1">
    <source>
        <dbReference type="UniProtKB" id="P26297"/>
    </source>
</evidence>
<evidence type="ECO:0000250" key="2">
    <source>
        <dbReference type="UniProtKB" id="P30901"/>
    </source>
</evidence>
<evidence type="ECO:0000305" key="3"/>
<organism>
    <name type="scientific">Streptococcus agalactiae serotype III (strain NEM316)</name>
    <dbReference type="NCBI Taxonomy" id="211110"/>
    <lineage>
        <taxon>Bacteria</taxon>
        <taxon>Bacillati</taxon>
        <taxon>Bacillota</taxon>
        <taxon>Bacilli</taxon>
        <taxon>Lactobacillales</taxon>
        <taxon>Streptococcaceae</taxon>
        <taxon>Streptococcus</taxon>
    </lineage>
</organism>
<gene>
    <name type="primary">ldhD</name>
    <name type="ordered locus">gbs0668</name>
</gene>
<feature type="chain" id="PRO_0000075968" description="D-lactate dehydrogenase">
    <location>
        <begin position="1"/>
        <end position="330"/>
    </location>
</feature>
<feature type="active site" evidence="1">
    <location>
        <position position="235"/>
    </location>
</feature>
<feature type="active site" evidence="1">
    <location>
        <position position="264"/>
    </location>
</feature>
<feature type="active site" description="Proton donor" evidence="1">
    <location>
        <position position="296"/>
    </location>
</feature>
<feature type="binding site" evidence="2">
    <location>
        <begin position="155"/>
        <end position="156"/>
    </location>
    <ligand>
        <name>NAD(+)</name>
        <dbReference type="ChEBI" id="CHEBI:57540"/>
    </ligand>
</feature>
<feature type="binding site" evidence="1">
    <location>
        <position position="175"/>
    </location>
    <ligand>
        <name>NAD(+)</name>
        <dbReference type="ChEBI" id="CHEBI:57540"/>
    </ligand>
</feature>
<feature type="binding site" evidence="2">
    <location>
        <begin position="206"/>
        <end position="207"/>
    </location>
    <ligand>
        <name>NAD(+)</name>
        <dbReference type="ChEBI" id="CHEBI:57540"/>
    </ligand>
</feature>
<feature type="binding site" evidence="2">
    <location>
        <position position="212"/>
    </location>
    <ligand>
        <name>NAD(+)</name>
        <dbReference type="ChEBI" id="CHEBI:57540"/>
    </ligand>
</feature>
<feature type="binding site" evidence="2">
    <location>
        <begin position="233"/>
        <end position="235"/>
    </location>
    <ligand>
        <name>NAD(+)</name>
        <dbReference type="ChEBI" id="CHEBI:57540"/>
    </ligand>
</feature>
<feature type="binding site" evidence="2">
    <location>
        <position position="259"/>
    </location>
    <ligand>
        <name>NAD(+)</name>
        <dbReference type="ChEBI" id="CHEBI:57540"/>
    </ligand>
</feature>
<dbReference type="EC" id="1.1.1.28"/>
<dbReference type="EMBL" id="AL766846">
    <property type="protein sequence ID" value="CAD46312.1"/>
    <property type="molecule type" value="Genomic_DNA"/>
</dbReference>
<dbReference type="RefSeq" id="WP_000770077.1">
    <property type="nucleotide sequence ID" value="NC_004368.1"/>
</dbReference>
<dbReference type="SMR" id="Q8E6A9"/>
<dbReference type="KEGG" id="san:gbs0668"/>
<dbReference type="eggNOG" id="COG1052">
    <property type="taxonomic scope" value="Bacteria"/>
</dbReference>
<dbReference type="HOGENOM" id="CLU_019796_1_1_9"/>
<dbReference type="Proteomes" id="UP000000823">
    <property type="component" value="Chromosome"/>
</dbReference>
<dbReference type="GO" id="GO:0008720">
    <property type="term" value="F:D-lactate dehydrogenase activity"/>
    <property type="evidence" value="ECO:0007669"/>
    <property type="project" value="UniProtKB-EC"/>
</dbReference>
<dbReference type="GO" id="GO:0051287">
    <property type="term" value="F:NAD binding"/>
    <property type="evidence" value="ECO:0007669"/>
    <property type="project" value="InterPro"/>
</dbReference>
<dbReference type="CDD" id="cd12186">
    <property type="entry name" value="LDH"/>
    <property type="match status" value="1"/>
</dbReference>
<dbReference type="Gene3D" id="3.40.50.720">
    <property type="entry name" value="NAD(P)-binding Rossmann-like Domain"/>
    <property type="match status" value="2"/>
</dbReference>
<dbReference type="InterPro" id="IPR006139">
    <property type="entry name" value="D-isomer_2_OHA_DH_cat_dom"/>
</dbReference>
<dbReference type="InterPro" id="IPR029753">
    <property type="entry name" value="D-isomer_DH_CS"/>
</dbReference>
<dbReference type="InterPro" id="IPR029752">
    <property type="entry name" value="D-isomer_DH_CS1"/>
</dbReference>
<dbReference type="InterPro" id="IPR006140">
    <property type="entry name" value="D-isomer_DH_NAD-bd"/>
</dbReference>
<dbReference type="InterPro" id="IPR036291">
    <property type="entry name" value="NAD(P)-bd_dom_sf"/>
</dbReference>
<dbReference type="NCBIfam" id="NF006374">
    <property type="entry name" value="PRK08605.1"/>
    <property type="match status" value="1"/>
</dbReference>
<dbReference type="PANTHER" id="PTHR43026">
    <property type="entry name" value="2-HYDROXYACID DEHYDROGENASE HOMOLOG 1-RELATED"/>
    <property type="match status" value="1"/>
</dbReference>
<dbReference type="PANTHER" id="PTHR43026:SF1">
    <property type="entry name" value="2-HYDROXYACID DEHYDROGENASE HOMOLOG 1-RELATED"/>
    <property type="match status" value="1"/>
</dbReference>
<dbReference type="Pfam" id="PF00389">
    <property type="entry name" value="2-Hacid_dh"/>
    <property type="match status" value="1"/>
</dbReference>
<dbReference type="Pfam" id="PF02826">
    <property type="entry name" value="2-Hacid_dh_C"/>
    <property type="match status" value="1"/>
</dbReference>
<dbReference type="SUPFAM" id="SSF52283">
    <property type="entry name" value="Formate/glycerate dehydrogenase catalytic domain-like"/>
    <property type="match status" value="1"/>
</dbReference>
<dbReference type="SUPFAM" id="SSF51735">
    <property type="entry name" value="NAD(P)-binding Rossmann-fold domains"/>
    <property type="match status" value="1"/>
</dbReference>
<dbReference type="PROSITE" id="PS00065">
    <property type="entry name" value="D_2_HYDROXYACID_DH_1"/>
    <property type="match status" value="1"/>
</dbReference>
<dbReference type="PROSITE" id="PS00671">
    <property type="entry name" value="D_2_HYDROXYACID_DH_3"/>
    <property type="match status" value="1"/>
</dbReference>
<proteinExistence type="inferred from homology"/>
<accession>Q8E6A9</accession>
<comment type="catalytic activity">
    <reaction>
        <text>(R)-lactate + NAD(+) = pyruvate + NADH + H(+)</text>
        <dbReference type="Rhea" id="RHEA:16369"/>
        <dbReference type="ChEBI" id="CHEBI:15361"/>
        <dbReference type="ChEBI" id="CHEBI:15378"/>
        <dbReference type="ChEBI" id="CHEBI:16004"/>
        <dbReference type="ChEBI" id="CHEBI:57540"/>
        <dbReference type="ChEBI" id="CHEBI:57945"/>
        <dbReference type="EC" id="1.1.1.28"/>
    </reaction>
</comment>
<comment type="similarity">
    <text evidence="3">Belongs to the D-isomer specific 2-hydroxyacid dehydrogenase family.</text>
</comment>
<sequence>MKLKVFNVREEEATLAQDWANRNHVELSMSEGPLTLETVNEVEGFDGIANAQIGPLDDAIYPLLKEMGIKQIAQRSAGVDMYNLELAKQHGIIISNVPSYSPESIAEFTVTIALNLIRKVELIRANVREQNFSWTLPIRGRVLGNMTVAIIGTGRIGLATAKIFKGFGCRVIGYDIYHNPMADGILEYVNSVEEAVEKADLVSLHMPPTAENTHLFNLDMFKQFKKGAILMNMARGALVETKDLLEALDQGLLEGAGIDTYEFEGPYIPKNCQGQDISDKDFLRLINHPKVIYTPHAAYYTDEAVKNLVEGALNACVEVVETGTTTTRVN</sequence>
<name>LDHD_STRA3</name>
<keyword id="KW-0520">NAD</keyword>
<keyword id="KW-0560">Oxidoreductase</keyword>
<protein>
    <recommendedName>
        <fullName>D-lactate dehydrogenase</fullName>
        <shortName>D-LDH</shortName>
        <ecNumber>1.1.1.28</ecNumber>
    </recommendedName>
    <alternativeName>
        <fullName>D-specific 2-hydroxyacid dehydrogenase</fullName>
    </alternativeName>
</protein>